<evidence type="ECO:0000250" key="1"/>
<evidence type="ECO:0000255" key="2"/>
<evidence type="ECO:0000305" key="3"/>
<organism>
    <name type="scientific">Squalus acanthias</name>
    <name type="common">Spiny dogfish</name>
    <dbReference type="NCBI Taxonomy" id="7797"/>
    <lineage>
        <taxon>Eukaryota</taxon>
        <taxon>Metazoa</taxon>
        <taxon>Chordata</taxon>
        <taxon>Craniata</taxon>
        <taxon>Vertebrata</taxon>
        <taxon>Chondrichthyes</taxon>
        <taxon>Elasmobranchii</taxon>
        <taxon>Squalomorphii</taxon>
        <taxon>Squaliformes</taxon>
        <taxon>Squalidae</taxon>
        <taxon>Squalus</taxon>
    </lineage>
</organism>
<feature type="chain" id="PRO_0000118335" description="NADH-ubiquinone oxidoreductase chain 6">
    <location>
        <begin position="1"/>
        <end position="173"/>
    </location>
</feature>
<feature type="transmembrane region" description="Helical" evidence="2">
    <location>
        <begin position="1"/>
        <end position="21"/>
    </location>
</feature>
<feature type="transmembrane region" description="Helical" evidence="2">
    <location>
        <begin position="25"/>
        <end position="45"/>
    </location>
</feature>
<feature type="transmembrane region" description="Helical" evidence="2">
    <location>
        <begin position="53"/>
        <end position="73"/>
    </location>
</feature>
<feature type="transmembrane region" description="Helical" evidence="2">
    <location>
        <begin position="82"/>
        <end position="102"/>
    </location>
</feature>
<feature type="transmembrane region" description="Helical" evidence="2">
    <location>
        <begin position="141"/>
        <end position="161"/>
    </location>
</feature>
<reference key="1">
    <citation type="journal article" date="1999" name="J. Mol. Evol.">
        <title>Phylogenetic studies of complete mitochondrial DNA molecules place cartilaginous fishes within the tree of bony fishes.</title>
        <authorList>
            <person name="Rasmussen A.S."/>
            <person name="Arnason U."/>
        </authorList>
    </citation>
    <scope>NUCLEOTIDE SEQUENCE [GENOMIC DNA]</scope>
</reference>
<geneLocation type="mitochondrion"/>
<keyword id="KW-0249">Electron transport</keyword>
<keyword id="KW-0472">Membrane</keyword>
<keyword id="KW-0496">Mitochondrion</keyword>
<keyword id="KW-0520">NAD</keyword>
<keyword id="KW-0679">Respiratory chain</keyword>
<keyword id="KW-1278">Translocase</keyword>
<keyword id="KW-0812">Transmembrane</keyword>
<keyword id="KW-1133">Transmembrane helix</keyword>
<keyword id="KW-0813">Transport</keyword>
<keyword id="KW-0830">Ubiquinone</keyword>
<sequence>MVYFMFIMLVGLILGLMAVASNPSPYFAALGLVVAAGVGCGLLVGHGGSFLSLVLFLIYLGGMLVVFAYTAALAAEPYPETWGDWSVLLYVSVYLLGIFFVGKYFFKEWGGLGWVGVEEMSNLEMIRGDFGGVALLYANGGIMLVLGGWVLLLTLFVILELTRGLSYGTLRVV</sequence>
<name>NU6M_SQUAC</name>
<protein>
    <recommendedName>
        <fullName>NADH-ubiquinone oxidoreductase chain 6</fullName>
        <ecNumber>7.1.1.2</ecNumber>
    </recommendedName>
    <alternativeName>
        <fullName>NADH dehydrogenase subunit 6</fullName>
    </alternativeName>
</protein>
<gene>
    <name type="primary">MT-ND6</name>
    <name type="synonym">MTND6</name>
    <name type="synonym">NADH6</name>
    <name type="synonym">ND6</name>
</gene>
<accession>Q9ZZ43</accession>
<proteinExistence type="inferred from homology"/>
<dbReference type="EC" id="7.1.1.2"/>
<dbReference type="EMBL" id="Y18134">
    <property type="protein sequence ID" value="CAA77060.1"/>
    <property type="molecule type" value="Genomic_DNA"/>
</dbReference>
<dbReference type="PIR" id="T11545">
    <property type="entry name" value="T11545"/>
</dbReference>
<dbReference type="RefSeq" id="NP_008534.1">
    <property type="nucleotide sequence ID" value="NC_002012.1"/>
</dbReference>
<dbReference type="SMR" id="Q9ZZ43"/>
<dbReference type="GeneID" id="808382"/>
<dbReference type="CTD" id="4541"/>
<dbReference type="GO" id="GO:0031966">
    <property type="term" value="C:mitochondrial membrane"/>
    <property type="evidence" value="ECO:0007669"/>
    <property type="project" value="UniProtKB-SubCell"/>
</dbReference>
<dbReference type="GO" id="GO:0008137">
    <property type="term" value="F:NADH dehydrogenase (ubiquinone) activity"/>
    <property type="evidence" value="ECO:0007669"/>
    <property type="project" value="UniProtKB-EC"/>
</dbReference>
<dbReference type="InterPro" id="IPR050269">
    <property type="entry name" value="ComplexI_Subunit6"/>
</dbReference>
<dbReference type="InterPro" id="IPR001457">
    <property type="entry name" value="NADH_UbQ/plastoQ_OxRdtase_su6"/>
</dbReference>
<dbReference type="PANTHER" id="PTHR11435">
    <property type="entry name" value="NADH UBIQUINONE OXIDOREDUCTASE SUBUNIT ND6"/>
    <property type="match status" value="1"/>
</dbReference>
<dbReference type="PANTHER" id="PTHR11435:SF1">
    <property type="entry name" value="NADH-UBIQUINONE OXIDOREDUCTASE CHAIN 6"/>
    <property type="match status" value="1"/>
</dbReference>
<dbReference type="Pfam" id="PF00499">
    <property type="entry name" value="Oxidored_q3"/>
    <property type="match status" value="1"/>
</dbReference>
<comment type="function">
    <text evidence="1">Core subunit of the mitochondrial membrane respiratory chain NADH dehydrogenase (Complex I) that is believed to belong to the minimal assembly required for catalysis. Complex I functions in the transfer of electrons from NADH to the respiratory chain. The immediate electron acceptor for the enzyme is believed to be ubiquinone (By similarity).</text>
</comment>
<comment type="catalytic activity">
    <reaction>
        <text>a ubiquinone + NADH + 5 H(+)(in) = a ubiquinol + NAD(+) + 4 H(+)(out)</text>
        <dbReference type="Rhea" id="RHEA:29091"/>
        <dbReference type="Rhea" id="RHEA-COMP:9565"/>
        <dbReference type="Rhea" id="RHEA-COMP:9566"/>
        <dbReference type="ChEBI" id="CHEBI:15378"/>
        <dbReference type="ChEBI" id="CHEBI:16389"/>
        <dbReference type="ChEBI" id="CHEBI:17976"/>
        <dbReference type="ChEBI" id="CHEBI:57540"/>
        <dbReference type="ChEBI" id="CHEBI:57945"/>
        <dbReference type="EC" id="7.1.1.2"/>
    </reaction>
</comment>
<comment type="subcellular location">
    <subcellularLocation>
        <location evidence="3">Mitochondrion membrane</location>
        <topology evidence="3">Multi-pass membrane protein</topology>
    </subcellularLocation>
</comment>
<comment type="similarity">
    <text evidence="3">Belongs to the complex I subunit 6 family.</text>
</comment>